<gene>
    <name type="ordered locus">ML0129</name>
</gene>
<sequence length="418" mass="45140">MSPDKREFDIVLYGATGFSGKLTAEHLALSESTARIALAGRSSERLRNVRALLGPNAQDWPLIVADASQPSTLEAMAGRAQVVLTTVGPYTRYGLPLVAACARTGTDYADLTGELMFCRNSIDLHHKQAAATGARIILACGFDSVPSDLNVYQLYRRVIEDRTGELCDTDLVLRSFSQRWVSGGSVAAYSEAMLTTSNDPEALRLVTDPYTLTTDRDAEPDLGPQPDFPRHRGSDLAPELAGFWTGGFVQAQFNTRIVRRSNALQNWSYGRQFRYSETMSLGKSWAAPVASAAVTSVVAGAVGLGNKYFNRLPRRVVERVTPKSGTGPSRKTQARGHYTFETYTTTTTGARYMATFAHNVDAYKSTAGLLAASGLTLALDRDRLSELRGVLTPAAAMGEALLTRLPSAGVVIGTTRLS</sequence>
<reference key="1">
    <citation type="journal article" date="2001" name="Nature">
        <title>Massive gene decay in the leprosy bacillus.</title>
        <authorList>
            <person name="Cole S.T."/>
            <person name="Eiglmeier K."/>
            <person name="Parkhill J."/>
            <person name="James K.D."/>
            <person name="Thomson N.R."/>
            <person name="Wheeler P.R."/>
            <person name="Honore N."/>
            <person name="Garnier T."/>
            <person name="Churcher C.M."/>
            <person name="Harris D.E."/>
            <person name="Mungall K.L."/>
            <person name="Basham D."/>
            <person name="Brown D."/>
            <person name="Chillingworth T."/>
            <person name="Connor R."/>
            <person name="Davies R.M."/>
            <person name="Devlin K."/>
            <person name="Duthoy S."/>
            <person name="Feltwell T."/>
            <person name="Fraser A."/>
            <person name="Hamlin N."/>
            <person name="Holroyd S."/>
            <person name="Hornsby T."/>
            <person name="Jagels K."/>
            <person name="Lacroix C."/>
            <person name="Maclean J."/>
            <person name="Moule S."/>
            <person name="Murphy L.D."/>
            <person name="Oliver K."/>
            <person name="Quail M.A."/>
            <person name="Rajandream M.A."/>
            <person name="Rutherford K.M."/>
            <person name="Rutter S."/>
            <person name="Seeger K."/>
            <person name="Simon S."/>
            <person name="Simmonds M."/>
            <person name="Skelton J."/>
            <person name="Squares R."/>
            <person name="Squares S."/>
            <person name="Stevens K."/>
            <person name="Taylor K."/>
            <person name="Whitehead S."/>
            <person name="Woodward J.R."/>
            <person name="Barrell B.G."/>
        </authorList>
    </citation>
    <scope>NUCLEOTIDE SEQUENCE [LARGE SCALE GENOMIC DNA]</scope>
    <source>
        <strain>TN</strain>
    </source>
</reference>
<comment type="function">
    <text evidence="1">Involved in the reduction of the double bond between C-4 and C-5 during phthiocerol dimycocerosates (DIM A) and glycosylated phenolphthiocerol dimycocerosates (PGL) biosynthesis.</text>
</comment>
<comment type="similarity">
    <text evidence="2">Belongs to the saccharopine dehydrogenase family. Enoyl reductase subfamily.</text>
</comment>
<evidence type="ECO:0000250" key="1"/>
<evidence type="ECO:0000305" key="2"/>
<keyword id="KW-0444">Lipid biosynthesis</keyword>
<keyword id="KW-0443">Lipid metabolism</keyword>
<keyword id="KW-0560">Oxidoreductase</keyword>
<keyword id="KW-1185">Reference proteome</keyword>
<feature type="chain" id="PRO_0000304693" description="Trans-acting enoyl reductase">
    <location>
        <begin position="1"/>
        <end position="418"/>
    </location>
</feature>
<dbReference type="EC" id="1.3.1.-"/>
<dbReference type="EMBL" id="AL583917">
    <property type="protein sequence ID" value="CAC29637.1"/>
    <property type="molecule type" value="Genomic_DNA"/>
</dbReference>
<dbReference type="PIR" id="A86925">
    <property type="entry name" value="A86925"/>
</dbReference>
<dbReference type="RefSeq" id="NP_301223.1">
    <property type="nucleotide sequence ID" value="NC_002677.1"/>
</dbReference>
<dbReference type="RefSeq" id="WP_010907548.1">
    <property type="nucleotide sequence ID" value="NC_002677.1"/>
</dbReference>
<dbReference type="STRING" id="272631.gene:17573944"/>
<dbReference type="KEGG" id="mle:ML0129"/>
<dbReference type="PATRIC" id="fig|272631.5.peg.197"/>
<dbReference type="Leproma" id="ML0129"/>
<dbReference type="eggNOG" id="COG3268">
    <property type="taxonomic scope" value="Bacteria"/>
</dbReference>
<dbReference type="HOGENOM" id="CLU_031002_0_2_11"/>
<dbReference type="OrthoDB" id="4369409at2"/>
<dbReference type="Proteomes" id="UP000000806">
    <property type="component" value="Chromosome"/>
</dbReference>
<dbReference type="GO" id="GO:0005886">
    <property type="term" value="C:plasma membrane"/>
    <property type="evidence" value="ECO:0007669"/>
    <property type="project" value="TreeGrafter"/>
</dbReference>
<dbReference type="GO" id="GO:0016491">
    <property type="term" value="F:oxidoreductase activity"/>
    <property type="evidence" value="ECO:0007669"/>
    <property type="project" value="UniProtKB-KW"/>
</dbReference>
<dbReference type="GO" id="GO:0009247">
    <property type="term" value="P:glycolipid biosynthetic process"/>
    <property type="evidence" value="ECO:0007669"/>
    <property type="project" value="TreeGrafter"/>
</dbReference>
<dbReference type="FunFam" id="3.40.50.720:FF:000413">
    <property type="entry name" value="Trans-acting enoyl reductase"/>
    <property type="match status" value="1"/>
</dbReference>
<dbReference type="Gene3D" id="3.40.50.720">
    <property type="entry name" value="NAD(P)-binding Rossmann-like Domain"/>
    <property type="match status" value="1"/>
</dbReference>
<dbReference type="InterPro" id="IPR036291">
    <property type="entry name" value="NAD(P)-bd_dom_sf"/>
</dbReference>
<dbReference type="InterPro" id="IPR051276">
    <property type="entry name" value="Saccharopine_DH-like_oxidrdct"/>
</dbReference>
<dbReference type="InterPro" id="IPR005097">
    <property type="entry name" value="Sacchrp_dh_NADP-bd"/>
</dbReference>
<dbReference type="PANTHER" id="PTHR12286">
    <property type="entry name" value="SACCHAROPINE DEHYDROGENASE-LIKE OXIDOREDUCTASE"/>
    <property type="match status" value="1"/>
</dbReference>
<dbReference type="PANTHER" id="PTHR12286:SF5">
    <property type="entry name" value="SACCHAROPINE DEHYDROGENASE-LIKE OXIDOREDUCTASE"/>
    <property type="match status" value="1"/>
</dbReference>
<dbReference type="Pfam" id="PF03435">
    <property type="entry name" value="Sacchrp_dh_NADP"/>
    <property type="match status" value="1"/>
</dbReference>
<dbReference type="SUPFAM" id="SSF51735">
    <property type="entry name" value="NAD(P)-binding Rossmann-fold domains"/>
    <property type="match status" value="1"/>
</dbReference>
<organism>
    <name type="scientific">Mycobacterium leprae (strain TN)</name>
    <dbReference type="NCBI Taxonomy" id="272631"/>
    <lineage>
        <taxon>Bacteria</taxon>
        <taxon>Bacillati</taxon>
        <taxon>Actinomycetota</taxon>
        <taxon>Actinomycetes</taxon>
        <taxon>Mycobacteriales</taxon>
        <taxon>Mycobacteriaceae</taxon>
        <taxon>Mycobacterium</taxon>
    </lineage>
</organism>
<name>TAER_MYCLE</name>
<proteinExistence type="inferred from homology"/>
<accession>Q9CD87</accession>
<protein>
    <recommendedName>
        <fullName>Trans-acting enoyl reductase</fullName>
        <ecNumber>1.3.1.-</ecNumber>
    </recommendedName>
</protein>